<organism>
    <name type="scientific">Salmonella choleraesuis (strain SC-B67)</name>
    <dbReference type="NCBI Taxonomy" id="321314"/>
    <lineage>
        <taxon>Bacteria</taxon>
        <taxon>Pseudomonadati</taxon>
        <taxon>Pseudomonadota</taxon>
        <taxon>Gammaproteobacteria</taxon>
        <taxon>Enterobacterales</taxon>
        <taxon>Enterobacteriaceae</taxon>
        <taxon>Salmonella</taxon>
    </lineage>
</organism>
<reference key="1">
    <citation type="journal article" date="2005" name="Nucleic Acids Res.">
        <title>The genome sequence of Salmonella enterica serovar Choleraesuis, a highly invasive and resistant zoonotic pathogen.</title>
        <authorList>
            <person name="Chiu C.-H."/>
            <person name="Tang P."/>
            <person name="Chu C."/>
            <person name="Hu S."/>
            <person name="Bao Q."/>
            <person name="Yu J."/>
            <person name="Chou Y.-Y."/>
            <person name="Wang H.-S."/>
            <person name="Lee Y.-S."/>
        </authorList>
    </citation>
    <scope>NUCLEOTIDE SEQUENCE [LARGE SCALE GENOMIC DNA]</scope>
    <source>
        <strain>SC-B67</strain>
    </source>
</reference>
<protein>
    <recommendedName>
        <fullName evidence="1">Aspartate carbamoyltransferase regulatory chain</fullName>
    </recommendedName>
</protein>
<sequence length="153" mass="17087">MTHDNKLQVEAIKCGTVIDHIPAQVGFKLLSLFKLTETDQRITIGLNLPSGEMGRKDLIKIENTFLTEEQVNQLALYAPQATVNRIDNYDVVGKSRPSLPERINNVLVCPNSNCISHAEPVSSSFAVKKRANDIALKCKYCEKEFSHYVVLAN</sequence>
<accession>Q57GE2</accession>
<proteinExistence type="inferred from homology"/>
<dbReference type="EMBL" id="AE017220">
    <property type="protein sequence ID" value="AAX68220.1"/>
    <property type="molecule type" value="Genomic_DNA"/>
</dbReference>
<dbReference type="RefSeq" id="WP_000148570.1">
    <property type="nucleotide sequence ID" value="NC_006905.1"/>
</dbReference>
<dbReference type="SMR" id="Q57GE2"/>
<dbReference type="KEGG" id="sec:SCH_4314"/>
<dbReference type="HOGENOM" id="CLU_128576_0_0_6"/>
<dbReference type="Proteomes" id="UP000000538">
    <property type="component" value="Chromosome"/>
</dbReference>
<dbReference type="GO" id="GO:0009347">
    <property type="term" value="C:aspartate carbamoyltransferase complex"/>
    <property type="evidence" value="ECO:0007669"/>
    <property type="project" value="InterPro"/>
</dbReference>
<dbReference type="GO" id="GO:0046872">
    <property type="term" value="F:metal ion binding"/>
    <property type="evidence" value="ECO:0007669"/>
    <property type="project" value="UniProtKB-KW"/>
</dbReference>
<dbReference type="GO" id="GO:0006207">
    <property type="term" value="P:'de novo' pyrimidine nucleobase biosynthetic process"/>
    <property type="evidence" value="ECO:0007669"/>
    <property type="project" value="InterPro"/>
</dbReference>
<dbReference type="GO" id="GO:0006221">
    <property type="term" value="P:pyrimidine nucleotide biosynthetic process"/>
    <property type="evidence" value="ECO:0007669"/>
    <property type="project" value="UniProtKB-UniRule"/>
</dbReference>
<dbReference type="FunFam" id="2.30.30.20:FF:000001">
    <property type="entry name" value="Aspartate carbamoyltransferase regulatory chain"/>
    <property type="match status" value="1"/>
</dbReference>
<dbReference type="FunFam" id="3.30.70.140:FF:000001">
    <property type="entry name" value="Aspartate carbamoyltransferase regulatory chain"/>
    <property type="match status" value="1"/>
</dbReference>
<dbReference type="Gene3D" id="2.30.30.20">
    <property type="entry name" value="Aspartate carbamoyltransferase regulatory subunit, C-terminal domain"/>
    <property type="match status" value="1"/>
</dbReference>
<dbReference type="Gene3D" id="3.30.70.140">
    <property type="entry name" value="Aspartate carbamoyltransferase regulatory subunit, N-terminal domain"/>
    <property type="match status" value="1"/>
</dbReference>
<dbReference type="HAMAP" id="MF_00002">
    <property type="entry name" value="Asp_carb_tr_reg"/>
    <property type="match status" value="1"/>
</dbReference>
<dbReference type="InterPro" id="IPR020545">
    <property type="entry name" value="Asp_carbamoyltransf_reg_N"/>
</dbReference>
<dbReference type="InterPro" id="IPR002801">
    <property type="entry name" value="Asp_carbamoylTrfase_reg"/>
</dbReference>
<dbReference type="InterPro" id="IPR020542">
    <property type="entry name" value="Asp_carbamoyltrfase_reg_C"/>
</dbReference>
<dbReference type="InterPro" id="IPR036792">
    <property type="entry name" value="Asp_carbatrfase_reg_C_sf"/>
</dbReference>
<dbReference type="InterPro" id="IPR036793">
    <property type="entry name" value="Asp_carbatrfase_reg_N_sf"/>
</dbReference>
<dbReference type="NCBIfam" id="TIGR00240">
    <property type="entry name" value="ATCase_reg"/>
    <property type="match status" value="1"/>
</dbReference>
<dbReference type="PANTHER" id="PTHR35805">
    <property type="entry name" value="ASPARTATE CARBAMOYLTRANSFERASE REGULATORY CHAIN"/>
    <property type="match status" value="1"/>
</dbReference>
<dbReference type="PANTHER" id="PTHR35805:SF1">
    <property type="entry name" value="ASPARTATE CARBAMOYLTRANSFERASE REGULATORY CHAIN"/>
    <property type="match status" value="1"/>
</dbReference>
<dbReference type="Pfam" id="PF01948">
    <property type="entry name" value="PyrI"/>
    <property type="match status" value="1"/>
</dbReference>
<dbReference type="Pfam" id="PF02748">
    <property type="entry name" value="PyrI_C"/>
    <property type="match status" value="1"/>
</dbReference>
<dbReference type="SUPFAM" id="SSF57825">
    <property type="entry name" value="Aspartate carbamoyltransferase, Regulatory-chain, C-terminal domain"/>
    <property type="match status" value="1"/>
</dbReference>
<dbReference type="SUPFAM" id="SSF54893">
    <property type="entry name" value="Aspartate carbamoyltransferase, Regulatory-chain, N-terminal domain"/>
    <property type="match status" value="1"/>
</dbReference>
<keyword id="KW-0479">Metal-binding</keyword>
<keyword id="KW-0665">Pyrimidine biosynthesis</keyword>
<keyword id="KW-0862">Zinc</keyword>
<feature type="chain" id="PRO_1000000047" description="Aspartate carbamoyltransferase regulatory chain">
    <location>
        <begin position="1"/>
        <end position="153"/>
    </location>
</feature>
<feature type="binding site" evidence="1">
    <location>
        <position position="109"/>
    </location>
    <ligand>
        <name>Zn(2+)</name>
        <dbReference type="ChEBI" id="CHEBI:29105"/>
    </ligand>
</feature>
<feature type="binding site" evidence="1">
    <location>
        <position position="114"/>
    </location>
    <ligand>
        <name>Zn(2+)</name>
        <dbReference type="ChEBI" id="CHEBI:29105"/>
    </ligand>
</feature>
<feature type="binding site" evidence="1">
    <location>
        <position position="138"/>
    </location>
    <ligand>
        <name>Zn(2+)</name>
        <dbReference type="ChEBI" id="CHEBI:29105"/>
    </ligand>
</feature>
<feature type="binding site" evidence="1">
    <location>
        <position position="141"/>
    </location>
    <ligand>
        <name>Zn(2+)</name>
        <dbReference type="ChEBI" id="CHEBI:29105"/>
    </ligand>
</feature>
<evidence type="ECO:0000255" key="1">
    <source>
        <dbReference type="HAMAP-Rule" id="MF_00002"/>
    </source>
</evidence>
<gene>
    <name evidence="1" type="primary">pyrI</name>
    <name type="ordered locus">SCH_4314</name>
</gene>
<name>PYRI_SALCH</name>
<comment type="function">
    <text evidence="1">Involved in allosteric regulation of aspartate carbamoyltransferase.</text>
</comment>
<comment type="cofactor">
    <cofactor evidence="1">
        <name>Zn(2+)</name>
        <dbReference type="ChEBI" id="CHEBI:29105"/>
    </cofactor>
    <text evidence="1">Binds 1 zinc ion per subunit.</text>
</comment>
<comment type="subunit">
    <text evidence="1">Contains catalytic and regulatory chains.</text>
</comment>
<comment type="similarity">
    <text evidence="1">Belongs to the PyrI family.</text>
</comment>